<proteinExistence type="inferred from homology"/>
<sequence>MDLQTALAEIKRGTEEILIEDELVEKLKSGKKLKIKAGFDPTAPDLHLGHTVLINKMKTFQDLGHEVVFLIGDFTGMIGDPTGKNVTRKPLTREDVLANAETYKEQVFKILDPAKTTVAFNSTWMENLGAAGMIKLAARQTVARMLERDDFKKRYASGQSIAIHEFLYPLVQGWDSVALEADVELGGTDQRFNLLMGRELQKDEGQKPQTVIMTPLLEGTDGVQKMSKSLGNYIGITDAPNDMFGKIMSISDVLMWRYYDLLSGLSIAGINAQKERVEQGTNPRDIKIELAKELIARFHSEADAQAAHDDFIQRFQKKALPDEIPELTVTIEQDSILIANLLKEANLVASTSEAMRMIKQGAVKLNGEDKITDTKLEIAKGSTAIYQVGKRKFANITVA</sequence>
<feature type="chain" id="PRO_0000236749" description="Tyrosine--tRNA ligase 2">
    <location>
        <begin position="1"/>
        <end position="399"/>
    </location>
</feature>
<feature type="domain" description="S4 RNA-binding" evidence="1">
    <location>
        <begin position="336"/>
        <end position="398"/>
    </location>
</feature>
<feature type="short sequence motif" description="'HIGH' region">
    <location>
        <begin position="41"/>
        <end position="50"/>
    </location>
</feature>
<feature type="short sequence motif" description="'KMSKS' region">
    <location>
        <begin position="225"/>
        <end position="229"/>
    </location>
</feature>
<feature type="binding site" evidence="1">
    <location>
        <position position="228"/>
    </location>
    <ligand>
        <name>ATP</name>
        <dbReference type="ChEBI" id="CHEBI:30616"/>
    </ligand>
</feature>
<evidence type="ECO:0000255" key="1">
    <source>
        <dbReference type="HAMAP-Rule" id="MF_02007"/>
    </source>
</evidence>
<comment type="function">
    <text evidence="1">Catalyzes the attachment of tyrosine to tRNA(Tyr) in a two-step reaction: tyrosine is first activated by ATP to form Tyr-AMP and then transferred to the acceptor end of tRNA(Tyr).</text>
</comment>
<comment type="catalytic activity">
    <reaction evidence="1">
        <text>tRNA(Tyr) + L-tyrosine + ATP = L-tyrosyl-tRNA(Tyr) + AMP + diphosphate + H(+)</text>
        <dbReference type="Rhea" id="RHEA:10220"/>
        <dbReference type="Rhea" id="RHEA-COMP:9706"/>
        <dbReference type="Rhea" id="RHEA-COMP:9707"/>
        <dbReference type="ChEBI" id="CHEBI:15378"/>
        <dbReference type="ChEBI" id="CHEBI:30616"/>
        <dbReference type="ChEBI" id="CHEBI:33019"/>
        <dbReference type="ChEBI" id="CHEBI:58315"/>
        <dbReference type="ChEBI" id="CHEBI:78442"/>
        <dbReference type="ChEBI" id="CHEBI:78536"/>
        <dbReference type="ChEBI" id="CHEBI:456215"/>
        <dbReference type="EC" id="6.1.1.1"/>
    </reaction>
</comment>
<comment type="subunit">
    <text evidence="1">Homodimer.</text>
</comment>
<comment type="subcellular location">
    <subcellularLocation>
        <location evidence="1">Cytoplasm</location>
    </subcellularLocation>
</comment>
<comment type="similarity">
    <text evidence="1">Belongs to the class-I aminoacyl-tRNA synthetase family. TyrS type 2 subfamily.</text>
</comment>
<reference key="1">
    <citation type="journal article" date="2005" name="Genome Res.">
        <title>Coping with cold: the genome of the versatile marine Antarctica bacterium Pseudoalteromonas haloplanktis TAC125.</title>
        <authorList>
            <person name="Medigue C."/>
            <person name="Krin E."/>
            <person name="Pascal G."/>
            <person name="Barbe V."/>
            <person name="Bernsel A."/>
            <person name="Bertin P.N."/>
            <person name="Cheung F."/>
            <person name="Cruveiller S."/>
            <person name="D'Amico S."/>
            <person name="Duilio A."/>
            <person name="Fang G."/>
            <person name="Feller G."/>
            <person name="Ho C."/>
            <person name="Mangenot S."/>
            <person name="Marino G."/>
            <person name="Nilsson J."/>
            <person name="Parrilli E."/>
            <person name="Rocha E.P.C."/>
            <person name="Rouy Z."/>
            <person name="Sekowska A."/>
            <person name="Tutino M.L."/>
            <person name="Vallenet D."/>
            <person name="von Heijne G."/>
            <person name="Danchin A."/>
        </authorList>
    </citation>
    <scope>NUCLEOTIDE SEQUENCE [LARGE SCALE GENOMIC DNA]</scope>
    <source>
        <strain>TAC 125</strain>
    </source>
</reference>
<gene>
    <name evidence="1" type="primary">tyrS2</name>
    <name type="ordered locus">PSHAa0545</name>
</gene>
<keyword id="KW-0030">Aminoacyl-tRNA synthetase</keyword>
<keyword id="KW-0067">ATP-binding</keyword>
<keyword id="KW-0963">Cytoplasm</keyword>
<keyword id="KW-0436">Ligase</keyword>
<keyword id="KW-0547">Nucleotide-binding</keyword>
<keyword id="KW-0648">Protein biosynthesis</keyword>
<keyword id="KW-1185">Reference proteome</keyword>
<keyword id="KW-0694">RNA-binding</keyword>
<organism>
    <name type="scientific">Pseudoalteromonas translucida (strain TAC 125)</name>
    <dbReference type="NCBI Taxonomy" id="326442"/>
    <lineage>
        <taxon>Bacteria</taxon>
        <taxon>Pseudomonadati</taxon>
        <taxon>Pseudomonadota</taxon>
        <taxon>Gammaproteobacteria</taxon>
        <taxon>Alteromonadales</taxon>
        <taxon>Pseudoalteromonadaceae</taxon>
        <taxon>Pseudoalteromonas</taxon>
    </lineage>
</organism>
<accession>Q3ILJ9</accession>
<name>SYY2_PSET1</name>
<protein>
    <recommendedName>
        <fullName evidence="1">Tyrosine--tRNA ligase 2</fullName>
        <ecNumber evidence="1">6.1.1.1</ecNumber>
    </recommendedName>
    <alternativeName>
        <fullName evidence="1">Tyrosyl-tRNA synthetase 2</fullName>
        <shortName evidence="1">TyrRS 2</shortName>
    </alternativeName>
</protein>
<dbReference type="EC" id="6.1.1.1" evidence="1"/>
<dbReference type="EMBL" id="CR954246">
    <property type="protein sequence ID" value="CAI85633.1"/>
    <property type="molecule type" value="Genomic_DNA"/>
</dbReference>
<dbReference type="SMR" id="Q3ILJ9"/>
<dbReference type="STRING" id="326442.PSHAa0545"/>
<dbReference type="KEGG" id="pha:PSHAa0545"/>
<dbReference type="eggNOG" id="COG0162">
    <property type="taxonomic scope" value="Bacteria"/>
</dbReference>
<dbReference type="HOGENOM" id="CLU_024003_5_0_6"/>
<dbReference type="BioCyc" id="PHAL326442:PSHA_RS02655-MONOMER"/>
<dbReference type="Proteomes" id="UP000006843">
    <property type="component" value="Chromosome I"/>
</dbReference>
<dbReference type="GO" id="GO:0005829">
    <property type="term" value="C:cytosol"/>
    <property type="evidence" value="ECO:0007669"/>
    <property type="project" value="TreeGrafter"/>
</dbReference>
<dbReference type="GO" id="GO:0005524">
    <property type="term" value="F:ATP binding"/>
    <property type="evidence" value="ECO:0007669"/>
    <property type="project" value="UniProtKB-UniRule"/>
</dbReference>
<dbReference type="GO" id="GO:0003723">
    <property type="term" value="F:RNA binding"/>
    <property type="evidence" value="ECO:0007669"/>
    <property type="project" value="UniProtKB-KW"/>
</dbReference>
<dbReference type="GO" id="GO:0004831">
    <property type="term" value="F:tyrosine-tRNA ligase activity"/>
    <property type="evidence" value="ECO:0007669"/>
    <property type="project" value="UniProtKB-UniRule"/>
</dbReference>
<dbReference type="GO" id="GO:0006437">
    <property type="term" value="P:tyrosyl-tRNA aminoacylation"/>
    <property type="evidence" value="ECO:0007669"/>
    <property type="project" value="UniProtKB-UniRule"/>
</dbReference>
<dbReference type="CDD" id="cd00165">
    <property type="entry name" value="S4"/>
    <property type="match status" value="1"/>
</dbReference>
<dbReference type="CDD" id="cd00805">
    <property type="entry name" value="TyrRS_core"/>
    <property type="match status" value="1"/>
</dbReference>
<dbReference type="FunFam" id="1.10.240.10:FF:000006">
    <property type="entry name" value="Tyrosine--tRNA ligase"/>
    <property type="match status" value="1"/>
</dbReference>
<dbReference type="FunFam" id="3.10.290.10:FF:000022">
    <property type="entry name" value="Tyrosine--tRNA ligase"/>
    <property type="match status" value="1"/>
</dbReference>
<dbReference type="FunFam" id="3.40.50.620:FF:000061">
    <property type="entry name" value="Tyrosine--tRNA ligase"/>
    <property type="match status" value="1"/>
</dbReference>
<dbReference type="Gene3D" id="3.40.50.620">
    <property type="entry name" value="HUPs"/>
    <property type="match status" value="1"/>
</dbReference>
<dbReference type="Gene3D" id="3.10.290.10">
    <property type="entry name" value="RNA-binding S4 domain"/>
    <property type="match status" value="1"/>
</dbReference>
<dbReference type="Gene3D" id="1.10.240.10">
    <property type="entry name" value="Tyrosyl-Transfer RNA Synthetase"/>
    <property type="match status" value="1"/>
</dbReference>
<dbReference type="HAMAP" id="MF_02007">
    <property type="entry name" value="Tyr_tRNA_synth_type2"/>
    <property type="match status" value="1"/>
</dbReference>
<dbReference type="InterPro" id="IPR001412">
    <property type="entry name" value="aa-tRNA-synth_I_CS"/>
</dbReference>
<dbReference type="InterPro" id="IPR002305">
    <property type="entry name" value="aa-tRNA-synth_Ic"/>
</dbReference>
<dbReference type="InterPro" id="IPR014729">
    <property type="entry name" value="Rossmann-like_a/b/a_fold"/>
</dbReference>
<dbReference type="InterPro" id="IPR002942">
    <property type="entry name" value="S4_RNA-bd"/>
</dbReference>
<dbReference type="InterPro" id="IPR036986">
    <property type="entry name" value="S4_RNA-bd_sf"/>
</dbReference>
<dbReference type="InterPro" id="IPR054608">
    <property type="entry name" value="SYY-like_C"/>
</dbReference>
<dbReference type="InterPro" id="IPR002307">
    <property type="entry name" value="Tyr-tRNA-ligase"/>
</dbReference>
<dbReference type="InterPro" id="IPR024088">
    <property type="entry name" value="Tyr-tRNA-ligase_bac-type"/>
</dbReference>
<dbReference type="InterPro" id="IPR024108">
    <property type="entry name" value="Tyr-tRNA-ligase_bac_2"/>
</dbReference>
<dbReference type="NCBIfam" id="TIGR00234">
    <property type="entry name" value="tyrS"/>
    <property type="match status" value="1"/>
</dbReference>
<dbReference type="PANTHER" id="PTHR11766:SF1">
    <property type="entry name" value="TYROSINE--TRNA LIGASE"/>
    <property type="match status" value="1"/>
</dbReference>
<dbReference type="PANTHER" id="PTHR11766">
    <property type="entry name" value="TYROSYL-TRNA SYNTHETASE"/>
    <property type="match status" value="1"/>
</dbReference>
<dbReference type="Pfam" id="PF22421">
    <property type="entry name" value="SYY_C-terminal"/>
    <property type="match status" value="1"/>
</dbReference>
<dbReference type="Pfam" id="PF00579">
    <property type="entry name" value="tRNA-synt_1b"/>
    <property type="match status" value="1"/>
</dbReference>
<dbReference type="PRINTS" id="PR01040">
    <property type="entry name" value="TRNASYNTHTYR"/>
</dbReference>
<dbReference type="SMART" id="SM00363">
    <property type="entry name" value="S4"/>
    <property type="match status" value="1"/>
</dbReference>
<dbReference type="SUPFAM" id="SSF55174">
    <property type="entry name" value="Alpha-L RNA-binding motif"/>
    <property type="match status" value="1"/>
</dbReference>
<dbReference type="SUPFAM" id="SSF52374">
    <property type="entry name" value="Nucleotidylyl transferase"/>
    <property type="match status" value="1"/>
</dbReference>
<dbReference type="PROSITE" id="PS00178">
    <property type="entry name" value="AA_TRNA_LIGASE_I"/>
    <property type="match status" value="1"/>
</dbReference>
<dbReference type="PROSITE" id="PS50889">
    <property type="entry name" value="S4"/>
    <property type="match status" value="1"/>
</dbReference>